<keyword id="KW-0001">2Fe-2S</keyword>
<keyword id="KW-0963">Cytoplasm</keyword>
<keyword id="KW-0408">Iron</keyword>
<keyword id="KW-0411">Iron-sulfur</keyword>
<keyword id="KW-0479">Metal-binding</keyword>
<keyword id="KW-0663">Pyridoxal phosphate</keyword>
<keyword id="KW-0808">Transferase</keyword>
<reference key="1">
    <citation type="journal article" date="2004" name="Nat. Genet.">
        <title>Comparison of genome degradation in Paratyphi A and Typhi, human-restricted serovars of Salmonella enterica that cause typhoid.</title>
        <authorList>
            <person name="McClelland M."/>
            <person name="Sanderson K.E."/>
            <person name="Clifton S.W."/>
            <person name="Latreille P."/>
            <person name="Porwollik S."/>
            <person name="Sabo A."/>
            <person name="Meyer R."/>
            <person name="Bieri T."/>
            <person name="Ozersky P."/>
            <person name="McLellan M."/>
            <person name="Harkins C.R."/>
            <person name="Wang C."/>
            <person name="Nguyen C."/>
            <person name="Berghoff A."/>
            <person name="Elliott G."/>
            <person name="Kohlberg S."/>
            <person name="Strong C."/>
            <person name="Du F."/>
            <person name="Carter J."/>
            <person name="Kremizki C."/>
            <person name="Layman D."/>
            <person name="Leonard S."/>
            <person name="Sun H."/>
            <person name="Fulton L."/>
            <person name="Nash W."/>
            <person name="Miner T."/>
            <person name="Minx P."/>
            <person name="Delehaunty K."/>
            <person name="Fronick C."/>
            <person name="Magrini V."/>
            <person name="Nhan M."/>
            <person name="Warren W."/>
            <person name="Florea L."/>
            <person name="Spieth J."/>
            <person name="Wilson R.K."/>
        </authorList>
    </citation>
    <scope>NUCLEOTIDE SEQUENCE [LARGE SCALE GENOMIC DNA]</scope>
    <source>
        <strain>ATCC 9150 / SARB42</strain>
    </source>
</reference>
<comment type="function">
    <text evidence="1">Master enzyme that delivers sulfur to a number of partners involved in Fe-S cluster assembly, tRNA modification or cofactor biosynthesis. Catalyzes the removal of elemental sulfur and selenium atoms from cysteine and selenocysteine to produce alanine. Functions as a sulfur delivery protein for Fe-S cluster synthesis onto IscU, an Fe-S scaffold assembly protein, as well as other S acceptor proteins. Also functions as a selenium delivery protein in the pathway for the biosynthesis of selenophosphate.</text>
</comment>
<comment type="catalytic activity">
    <reaction evidence="1">
        <text>(sulfur carrier)-H + L-cysteine = (sulfur carrier)-SH + L-alanine</text>
        <dbReference type="Rhea" id="RHEA:43892"/>
        <dbReference type="Rhea" id="RHEA-COMP:14737"/>
        <dbReference type="Rhea" id="RHEA-COMP:14739"/>
        <dbReference type="ChEBI" id="CHEBI:29917"/>
        <dbReference type="ChEBI" id="CHEBI:35235"/>
        <dbReference type="ChEBI" id="CHEBI:57972"/>
        <dbReference type="ChEBI" id="CHEBI:64428"/>
        <dbReference type="EC" id="2.8.1.7"/>
    </reaction>
</comment>
<comment type="cofactor">
    <cofactor evidence="1">
        <name>pyridoxal 5'-phosphate</name>
        <dbReference type="ChEBI" id="CHEBI:597326"/>
    </cofactor>
</comment>
<comment type="pathway">
    <text evidence="1">Cofactor biosynthesis; iron-sulfur cluster biosynthesis.</text>
</comment>
<comment type="subunit">
    <text evidence="1">Homodimer. Forms a heterotetramer with IscU, interacts with other sulfur acceptors.</text>
</comment>
<comment type="subcellular location">
    <subcellularLocation>
        <location evidence="1">Cytoplasm</location>
    </subcellularLocation>
</comment>
<comment type="similarity">
    <text evidence="1">Belongs to the class-V pyridoxal-phosphate-dependent aminotransferase family. NifS/IscS subfamily.</text>
</comment>
<feature type="chain" id="PRO_1000019439" description="Cysteine desulfurase IscS">
    <location>
        <begin position="1"/>
        <end position="404"/>
    </location>
</feature>
<feature type="active site" description="Cysteine persulfide intermediate" evidence="1">
    <location>
        <position position="328"/>
    </location>
</feature>
<feature type="binding site" evidence="1">
    <location>
        <begin position="75"/>
        <end position="76"/>
    </location>
    <ligand>
        <name>pyridoxal 5'-phosphate</name>
        <dbReference type="ChEBI" id="CHEBI:597326"/>
    </ligand>
</feature>
<feature type="binding site" evidence="1">
    <location>
        <position position="155"/>
    </location>
    <ligand>
        <name>pyridoxal 5'-phosphate</name>
        <dbReference type="ChEBI" id="CHEBI:597326"/>
    </ligand>
</feature>
<feature type="binding site" evidence="1">
    <location>
        <position position="183"/>
    </location>
    <ligand>
        <name>pyridoxal 5'-phosphate</name>
        <dbReference type="ChEBI" id="CHEBI:597326"/>
    </ligand>
</feature>
<feature type="binding site" evidence="1">
    <location>
        <begin position="203"/>
        <end position="205"/>
    </location>
    <ligand>
        <name>pyridoxal 5'-phosphate</name>
        <dbReference type="ChEBI" id="CHEBI:597326"/>
    </ligand>
</feature>
<feature type="binding site" evidence="1">
    <location>
        <position position="243"/>
    </location>
    <ligand>
        <name>pyridoxal 5'-phosphate</name>
        <dbReference type="ChEBI" id="CHEBI:597326"/>
    </ligand>
</feature>
<feature type="binding site" description="via persulfide group" evidence="1">
    <location>
        <position position="328"/>
    </location>
    <ligand>
        <name>[2Fe-2S] cluster</name>
        <dbReference type="ChEBI" id="CHEBI:190135"/>
        <note>ligand shared with IscU</note>
    </ligand>
</feature>
<feature type="modified residue" description="N6-(pyridoxal phosphate)lysine" evidence="1">
    <location>
        <position position="206"/>
    </location>
</feature>
<proteinExistence type="inferred from homology"/>
<accession>Q5PNG1</accession>
<sequence length="404" mass="45092">MKLPIYLDYSATTPVDPRVAEKMMQFLTLDGTFGNPASRSHRFGWQAEEAVDIARNQIAELVGADPREIVFTSGATESDNLAIKGAANFYQKKGKHIITSKTEHKAVLDTCRQLEREGFEVTYLAPQRNGIIDLNELEAAMRDDTILVSIMHVNNEIGVVQDIATIGEMCRARGIIYHVDATQSVGKLPIDLSQLKVDLMSFSGHKIYGPKGIGALYVRRKPRIRIEAQMHGGGHERGMRSGTLPVHQIVGMGEAYRIAKEEMETEMARLRGLRNRLWNGIKDIEEVYLNGDLEQGAPNILNVSFNYVEGESLIMALKDLAVSSGSACTSASLEPSYVLRALGMNDELAHSSIRFSLGRFTTEEEIDYTIDLVRKSIGRLRDLSPLWEMYKQGVDLNSIEWAHH</sequence>
<evidence type="ECO:0000255" key="1">
    <source>
        <dbReference type="HAMAP-Rule" id="MF_00331"/>
    </source>
</evidence>
<gene>
    <name evidence="1" type="primary">iscS</name>
    <name type="ordered locus">SPA0323</name>
</gene>
<dbReference type="EC" id="2.8.1.7" evidence="1"/>
<dbReference type="EMBL" id="CP000026">
    <property type="protein sequence ID" value="AAV76342.1"/>
    <property type="molecule type" value="Genomic_DNA"/>
</dbReference>
<dbReference type="RefSeq" id="WP_000775263.1">
    <property type="nucleotide sequence ID" value="NC_006511.1"/>
</dbReference>
<dbReference type="SMR" id="Q5PNG1"/>
<dbReference type="KEGG" id="spt:SPA0323"/>
<dbReference type="HOGENOM" id="CLU_003433_0_2_6"/>
<dbReference type="UniPathway" id="UPA00266"/>
<dbReference type="Proteomes" id="UP000008185">
    <property type="component" value="Chromosome"/>
</dbReference>
<dbReference type="GO" id="GO:1990221">
    <property type="term" value="C:L-cysteine desulfurase complex"/>
    <property type="evidence" value="ECO:0007669"/>
    <property type="project" value="UniProtKB-ARBA"/>
</dbReference>
<dbReference type="GO" id="GO:0051537">
    <property type="term" value="F:2 iron, 2 sulfur cluster binding"/>
    <property type="evidence" value="ECO:0007669"/>
    <property type="project" value="UniProtKB-UniRule"/>
</dbReference>
<dbReference type="GO" id="GO:0031071">
    <property type="term" value="F:cysteine desulfurase activity"/>
    <property type="evidence" value="ECO:0007669"/>
    <property type="project" value="UniProtKB-UniRule"/>
</dbReference>
<dbReference type="GO" id="GO:0046872">
    <property type="term" value="F:metal ion binding"/>
    <property type="evidence" value="ECO:0007669"/>
    <property type="project" value="UniProtKB-KW"/>
</dbReference>
<dbReference type="GO" id="GO:0030170">
    <property type="term" value="F:pyridoxal phosphate binding"/>
    <property type="evidence" value="ECO:0007669"/>
    <property type="project" value="UniProtKB-UniRule"/>
</dbReference>
<dbReference type="GO" id="GO:0044571">
    <property type="term" value="P:[2Fe-2S] cluster assembly"/>
    <property type="evidence" value="ECO:0007669"/>
    <property type="project" value="UniProtKB-UniRule"/>
</dbReference>
<dbReference type="FunFam" id="3.40.640.10:FF:000003">
    <property type="entry name" value="Cysteine desulfurase IscS"/>
    <property type="match status" value="1"/>
</dbReference>
<dbReference type="FunFam" id="3.90.1150.10:FF:000002">
    <property type="entry name" value="Cysteine desulfurase IscS"/>
    <property type="match status" value="1"/>
</dbReference>
<dbReference type="Gene3D" id="3.90.1150.10">
    <property type="entry name" value="Aspartate Aminotransferase, domain 1"/>
    <property type="match status" value="1"/>
</dbReference>
<dbReference type="Gene3D" id="3.40.640.10">
    <property type="entry name" value="Type I PLP-dependent aspartate aminotransferase-like (Major domain)"/>
    <property type="match status" value="1"/>
</dbReference>
<dbReference type="HAMAP" id="MF_00331">
    <property type="entry name" value="Cys_desulf_IscS"/>
    <property type="match status" value="1"/>
</dbReference>
<dbReference type="InterPro" id="IPR000192">
    <property type="entry name" value="Aminotrans_V_dom"/>
</dbReference>
<dbReference type="InterPro" id="IPR020578">
    <property type="entry name" value="Aminotrans_V_PyrdxlP_BS"/>
</dbReference>
<dbReference type="InterPro" id="IPR010240">
    <property type="entry name" value="Cys_deSase_IscS"/>
</dbReference>
<dbReference type="InterPro" id="IPR016454">
    <property type="entry name" value="Cysteine_dSase"/>
</dbReference>
<dbReference type="InterPro" id="IPR015424">
    <property type="entry name" value="PyrdxlP-dep_Trfase"/>
</dbReference>
<dbReference type="InterPro" id="IPR015421">
    <property type="entry name" value="PyrdxlP-dep_Trfase_major"/>
</dbReference>
<dbReference type="InterPro" id="IPR015422">
    <property type="entry name" value="PyrdxlP-dep_Trfase_small"/>
</dbReference>
<dbReference type="NCBIfam" id="TIGR02006">
    <property type="entry name" value="IscS"/>
    <property type="match status" value="1"/>
</dbReference>
<dbReference type="NCBIfam" id="NF002806">
    <property type="entry name" value="PRK02948.1"/>
    <property type="match status" value="1"/>
</dbReference>
<dbReference type="NCBIfam" id="NF010611">
    <property type="entry name" value="PRK14012.1"/>
    <property type="match status" value="1"/>
</dbReference>
<dbReference type="PANTHER" id="PTHR11601:SF34">
    <property type="entry name" value="CYSTEINE DESULFURASE"/>
    <property type="match status" value="1"/>
</dbReference>
<dbReference type="PANTHER" id="PTHR11601">
    <property type="entry name" value="CYSTEINE DESULFURYLASE FAMILY MEMBER"/>
    <property type="match status" value="1"/>
</dbReference>
<dbReference type="Pfam" id="PF00266">
    <property type="entry name" value="Aminotran_5"/>
    <property type="match status" value="1"/>
</dbReference>
<dbReference type="PIRSF" id="PIRSF005572">
    <property type="entry name" value="NifS"/>
    <property type="match status" value="1"/>
</dbReference>
<dbReference type="SUPFAM" id="SSF53383">
    <property type="entry name" value="PLP-dependent transferases"/>
    <property type="match status" value="1"/>
</dbReference>
<dbReference type="PROSITE" id="PS00595">
    <property type="entry name" value="AA_TRANSFER_CLASS_5"/>
    <property type="match status" value="1"/>
</dbReference>
<protein>
    <recommendedName>
        <fullName evidence="1">Cysteine desulfurase IscS</fullName>
        <ecNumber evidence="1">2.8.1.7</ecNumber>
    </recommendedName>
</protein>
<organism>
    <name type="scientific">Salmonella paratyphi A (strain ATCC 9150 / SARB42)</name>
    <dbReference type="NCBI Taxonomy" id="295319"/>
    <lineage>
        <taxon>Bacteria</taxon>
        <taxon>Pseudomonadati</taxon>
        <taxon>Pseudomonadota</taxon>
        <taxon>Gammaproteobacteria</taxon>
        <taxon>Enterobacterales</taxon>
        <taxon>Enterobacteriaceae</taxon>
        <taxon>Salmonella</taxon>
    </lineage>
</organism>
<name>ISCS_SALPA</name>